<keyword id="KW-0217">Developmental protein</keyword>
<keyword id="KW-0225">Disease variant</keyword>
<keyword id="KW-0238">DNA-binding</keyword>
<keyword id="KW-0038">Ectodermal dysplasia</keyword>
<keyword id="KW-0371">Homeobox</keyword>
<keyword id="KW-1017">Isopeptide bond</keyword>
<keyword id="KW-0539">Nucleus</keyword>
<keyword id="KW-1267">Proteomics identification</keyword>
<keyword id="KW-1185">Reference proteome</keyword>
<keyword id="KW-0678">Repressor</keyword>
<keyword id="KW-0804">Transcription</keyword>
<keyword id="KW-0805">Transcription regulation</keyword>
<keyword id="KW-0832">Ubl conjugation</keyword>
<organism>
    <name type="scientific">Homo sapiens</name>
    <name type="common">Human</name>
    <dbReference type="NCBI Taxonomy" id="9606"/>
    <lineage>
        <taxon>Eukaryota</taxon>
        <taxon>Metazoa</taxon>
        <taxon>Chordata</taxon>
        <taxon>Craniata</taxon>
        <taxon>Vertebrata</taxon>
        <taxon>Euteleostomi</taxon>
        <taxon>Mammalia</taxon>
        <taxon>Eutheria</taxon>
        <taxon>Euarchontoglires</taxon>
        <taxon>Primates</taxon>
        <taxon>Haplorrhini</taxon>
        <taxon>Catarrhini</taxon>
        <taxon>Hominidae</taxon>
        <taxon>Homo</taxon>
    </lineage>
</organism>
<gene>
    <name evidence="14" type="primary">MSX1</name>
    <name evidence="10" type="synonym">HOX7</name>
</gene>
<dbReference type="EMBL" id="M76732">
    <property type="protein sequence ID" value="AAA58665.1"/>
    <property type="status" value="ALT_INIT"/>
    <property type="molecule type" value="Genomic_DNA"/>
</dbReference>
<dbReference type="EMBL" id="M76731">
    <property type="protein sequence ID" value="AAA58665.1"/>
    <property type="status" value="JOINED"/>
    <property type="molecule type" value="Genomic_DNA"/>
</dbReference>
<dbReference type="EMBL" id="M97676">
    <property type="protein sequence ID" value="AAA52683.1"/>
    <property type="status" value="ALT_INIT"/>
    <property type="molecule type" value="mRNA"/>
</dbReference>
<dbReference type="EMBL" id="AF426432">
    <property type="protein sequence ID" value="AAL17870.1"/>
    <property type="status" value="ALT_INIT"/>
    <property type="molecule type" value="Genomic_DNA"/>
</dbReference>
<dbReference type="EMBL" id="AK290636">
    <property type="protein sequence ID" value="BAF83325.1"/>
    <property type="status" value="ALT_INIT"/>
    <property type="molecule type" value="mRNA"/>
</dbReference>
<dbReference type="EMBL" id="AC092437">
    <property type="status" value="NOT_ANNOTATED_CDS"/>
    <property type="molecule type" value="Genomic_DNA"/>
</dbReference>
<dbReference type="EMBL" id="BC021285">
    <property type="protein sequence ID" value="AAH21285.4"/>
    <property type="molecule type" value="mRNA"/>
</dbReference>
<dbReference type="EMBL" id="BC067353">
    <property type="protein sequence ID" value="AAH67353.1"/>
    <property type="status" value="ALT_INIT"/>
    <property type="molecule type" value="mRNA"/>
</dbReference>
<dbReference type="EMBL" id="EF065625">
    <property type="protein sequence ID" value="ABK81117.1"/>
    <property type="status" value="ALT_INIT"/>
    <property type="molecule type" value="Genomic_DNA"/>
</dbReference>
<dbReference type="CCDS" id="CCDS3378.2"/>
<dbReference type="PIR" id="A40560">
    <property type="entry name" value="A40560"/>
</dbReference>
<dbReference type="PIR" id="I54320">
    <property type="entry name" value="I54320"/>
</dbReference>
<dbReference type="RefSeq" id="NP_002439.2">
    <property type="nucleotide sequence ID" value="NM_002448.3"/>
</dbReference>
<dbReference type="SMR" id="P28360"/>
<dbReference type="BioGRID" id="110593">
    <property type="interactions" value="18"/>
</dbReference>
<dbReference type="CORUM" id="P28360"/>
<dbReference type="FunCoup" id="P28360">
    <property type="interactions" value="1884"/>
</dbReference>
<dbReference type="IntAct" id="P28360">
    <property type="interactions" value="7"/>
</dbReference>
<dbReference type="MINT" id="P28360"/>
<dbReference type="STRING" id="9606.ENSP00000372170"/>
<dbReference type="iPTMnet" id="P28360"/>
<dbReference type="PhosphoSitePlus" id="P28360"/>
<dbReference type="SwissPalm" id="P28360"/>
<dbReference type="BioMuta" id="MSX1"/>
<dbReference type="DMDM" id="557952603"/>
<dbReference type="jPOST" id="P28360"/>
<dbReference type="MassIVE" id="P28360"/>
<dbReference type="PaxDb" id="9606-ENSP00000372170"/>
<dbReference type="PeptideAtlas" id="P28360"/>
<dbReference type="ProteomicsDB" id="54482"/>
<dbReference type="Pumba" id="P28360"/>
<dbReference type="Antibodypedia" id="9270">
    <property type="antibodies" value="394 antibodies from 40 providers"/>
</dbReference>
<dbReference type="DNASU" id="4487"/>
<dbReference type="Ensembl" id="ENST00000382723.5">
    <property type="protein sequence ID" value="ENSP00000372170.4"/>
    <property type="gene ID" value="ENSG00000163132.8"/>
</dbReference>
<dbReference type="GeneID" id="4487"/>
<dbReference type="KEGG" id="hsa:4487"/>
<dbReference type="MANE-Select" id="ENST00000382723.5">
    <property type="protein sequence ID" value="ENSP00000372170.4"/>
    <property type="RefSeq nucleotide sequence ID" value="NM_002448.3"/>
    <property type="RefSeq protein sequence ID" value="NP_002439.2"/>
</dbReference>
<dbReference type="UCSC" id="uc003gif.4">
    <property type="organism name" value="human"/>
</dbReference>
<dbReference type="AGR" id="HGNC:7391"/>
<dbReference type="CTD" id="4487"/>
<dbReference type="DisGeNET" id="4487"/>
<dbReference type="GeneCards" id="MSX1"/>
<dbReference type="HGNC" id="HGNC:7391">
    <property type="gene designation" value="MSX1"/>
</dbReference>
<dbReference type="HPA" id="ENSG00000163132">
    <property type="expression patterns" value="Group enriched (cervix, choroid plexus)"/>
</dbReference>
<dbReference type="MalaCards" id="MSX1"/>
<dbReference type="MIM" id="106600">
    <property type="type" value="phenotype"/>
</dbReference>
<dbReference type="MIM" id="142983">
    <property type="type" value="gene"/>
</dbReference>
<dbReference type="MIM" id="189500">
    <property type="type" value="phenotype"/>
</dbReference>
<dbReference type="MIM" id="608874">
    <property type="type" value="phenotype"/>
</dbReference>
<dbReference type="neXtProt" id="NX_P28360"/>
<dbReference type="OpenTargets" id="ENSG00000163132"/>
<dbReference type="Orphanet" id="141291">
    <property type="disease" value="Cleft lip and alveolus"/>
</dbReference>
<dbReference type="Orphanet" id="199306">
    <property type="disease" value="Cleft lip/palate"/>
</dbReference>
<dbReference type="Orphanet" id="2228">
    <property type="disease" value="Hypodontia-dysplasia of nails syndrome"/>
</dbReference>
<dbReference type="Orphanet" id="199302">
    <property type="disease" value="Isolated cleft lip"/>
</dbReference>
<dbReference type="Orphanet" id="99798">
    <property type="disease" value="Oligodontia"/>
</dbReference>
<dbReference type="PharmGKB" id="PA31196"/>
<dbReference type="VEuPathDB" id="HostDB:ENSG00000163132"/>
<dbReference type="eggNOG" id="KOG0492">
    <property type="taxonomic scope" value="Eukaryota"/>
</dbReference>
<dbReference type="GeneTree" id="ENSGT00940000161623"/>
<dbReference type="HOGENOM" id="CLU_072675_1_0_1"/>
<dbReference type="InParanoid" id="P28360"/>
<dbReference type="OMA" id="WMQTPRF"/>
<dbReference type="OrthoDB" id="6159439at2759"/>
<dbReference type="PAN-GO" id="P28360">
    <property type="GO annotations" value="5 GO annotations based on evolutionary models"/>
</dbReference>
<dbReference type="PhylomeDB" id="P28360"/>
<dbReference type="TreeFam" id="TF350699"/>
<dbReference type="PathwayCommons" id="P28360"/>
<dbReference type="Reactome" id="R-HSA-9834899">
    <property type="pathway name" value="Specification of the neural plate border"/>
</dbReference>
<dbReference type="SignaLink" id="P28360"/>
<dbReference type="SIGNOR" id="P28360"/>
<dbReference type="BioGRID-ORCS" id="4487">
    <property type="hits" value="13 hits in 1182 CRISPR screens"/>
</dbReference>
<dbReference type="ChiTaRS" id="MSX1">
    <property type="organism name" value="human"/>
</dbReference>
<dbReference type="GeneWiki" id="MSX1"/>
<dbReference type="GenomeRNAi" id="4487"/>
<dbReference type="Pharos" id="P28360">
    <property type="development level" value="Tbio"/>
</dbReference>
<dbReference type="PRO" id="PR:P28360"/>
<dbReference type="Proteomes" id="UP000005640">
    <property type="component" value="Chromosome 4"/>
</dbReference>
<dbReference type="RNAct" id="P28360">
    <property type="molecule type" value="protein"/>
</dbReference>
<dbReference type="Bgee" id="ENSG00000163132">
    <property type="expression patterns" value="Expressed in buccal mucosa cell and 162 other cell types or tissues"/>
</dbReference>
<dbReference type="GO" id="GO:0000785">
    <property type="term" value="C:chromatin"/>
    <property type="evidence" value="ECO:0000247"/>
    <property type="project" value="NTNU_SB"/>
</dbReference>
<dbReference type="GO" id="GO:0034399">
    <property type="term" value="C:nuclear periphery"/>
    <property type="evidence" value="ECO:0000250"/>
    <property type="project" value="UniProtKB"/>
</dbReference>
<dbReference type="GO" id="GO:0005654">
    <property type="term" value="C:nucleoplasm"/>
    <property type="evidence" value="ECO:0000314"/>
    <property type="project" value="HPA"/>
</dbReference>
<dbReference type="GO" id="GO:0005634">
    <property type="term" value="C:nucleus"/>
    <property type="evidence" value="ECO:0000314"/>
    <property type="project" value="BHF-UCL"/>
</dbReference>
<dbReference type="GO" id="GO:0005667">
    <property type="term" value="C:transcription regulator complex"/>
    <property type="evidence" value="ECO:0007669"/>
    <property type="project" value="Ensembl"/>
</dbReference>
<dbReference type="GO" id="GO:0000987">
    <property type="term" value="F:cis-regulatory region sequence-specific DNA binding"/>
    <property type="evidence" value="ECO:0007669"/>
    <property type="project" value="Ensembl"/>
</dbReference>
<dbReference type="GO" id="GO:0001228">
    <property type="term" value="F:DNA-binding transcription activator activity, RNA polymerase II-specific"/>
    <property type="evidence" value="ECO:0007669"/>
    <property type="project" value="Ensembl"/>
</dbReference>
<dbReference type="GO" id="GO:0000981">
    <property type="term" value="F:DNA-binding transcription factor activity, RNA polymerase II-specific"/>
    <property type="evidence" value="ECO:0000247"/>
    <property type="project" value="NTNU_SB"/>
</dbReference>
<dbReference type="GO" id="GO:0001227">
    <property type="term" value="F:DNA-binding transcription repressor activity, RNA polymerase II-specific"/>
    <property type="evidence" value="ECO:0007669"/>
    <property type="project" value="Ensembl"/>
</dbReference>
<dbReference type="GO" id="GO:0002039">
    <property type="term" value="F:p53 binding"/>
    <property type="evidence" value="ECO:0000353"/>
    <property type="project" value="BHF-UCL"/>
</dbReference>
<dbReference type="GO" id="GO:0000977">
    <property type="term" value="F:RNA polymerase II transcription regulatory region sequence-specific DNA binding"/>
    <property type="evidence" value="ECO:0000318"/>
    <property type="project" value="GO_Central"/>
</dbReference>
<dbReference type="GO" id="GO:1990837">
    <property type="term" value="F:sequence-specific double-stranded DNA binding"/>
    <property type="evidence" value="ECO:0000314"/>
    <property type="project" value="ARUK-UCL"/>
</dbReference>
<dbReference type="GO" id="GO:0000976">
    <property type="term" value="F:transcription cis-regulatory region binding"/>
    <property type="evidence" value="ECO:0000250"/>
    <property type="project" value="UniProtKB"/>
</dbReference>
<dbReference type="GO" id="GO:0090427">
    <property type="term" value="P:activation of meiosis"/>
    <property type="evidence" value="ECO:0007669"/>
    <property type="project" value="Ensembl"/>
</dbReference>
<dbReference type="GO" id="GO:0009952">
    <property type="term" value="P:anterior/posterior pattern specification"/>
    <property type="evidence" value="ECO:0007669"/>
    <property type="project" value="Ensembl"/>
</dbReference>
<dbReference type="GO" id="GO:0030509">
    <property type="term" value="P:BMP signaling pathway"/>
    <property type="evidence" value="ECO:0007669"/>
    <property type="project" value="Ensembl"/>
</dbReference>
<dbReference type="GO" id="GO:0060349">
    <property type="term" value="P:bone morphogenesis"/>
    <property type="evidence" value="ECO:0007669"/>
    <property type="project" value="Ensembl"/>
</dbReference>
<dbReference type="GO" id="GO:0003161">
    <property type="term" value="P:cardiac conduction system development"/>
    <property type="evidence" value="ECO:0000303"/>
    <property type="project" value="BHF-UCL"/>
</dbReference>
<dbReference type="GO" id="GO:0060536">
    <property type="term" value="P:cartilage morphogenesis"/>
    <property type="evidence" value="ECO:0007669"/>
    <property type="project" value="Ensembl"/>
</dbReference>
<dbReference type="GO" id="GO:0000902">
    <property type="term" value="P:cell morphogenesis"/>
    <property type="evidence" value="ECO:0000314"/>
    <property type="project" value="BHF-UCL"/>
</dbReference>
<dbReference type="GO" id="GO:0061311">
    <property type="term" value="P:cell surface receptor signaling pathway involved in heart development"/>
    <property type="evidence" value="ECO:0007669"/>
    <property type="project" value="Ensembl"/>
</dbReference>
<dbReference type="GO" id="GO:0071316">
    <property type="term" value="P:cellular response to nicotine"/>
    <property type="evidence" value="ECO:0007669"/>
    <property type="project" value="Ensembl"/>
</dbReference>
<dbReference type="GO" id="GO:0035115">
    <property type="term" value="P:embryonic forelimb morphogenesis"/>
    <property type="evidence" value="ECO:0007669"/>
    <property type="project" value="Ensembl"/>
</dbReference>
<dbReference type="GO" id="GO:0035116">
    <property type="term" value="P:embryonic hindlimb morphogenesis"/>
    <property type="evidence" value="ECO:0007669"/>
    <property type="project" value="Ensembl"/>
</dbReference>
<dbReference type="GO" id="GO:0048598">
    <property type="term" value="P:embryonic morphogenesis"/>
    <property type="evidence" value="ECO:0000318"/>
    <property type="project" value="GO_Central"/>
</dbReference>
<dbReference type="GO" id="GO:0035880">
    <property type="term" value="P:embryonic nail plate morphogenesis"/>
    <property type="evidence" value="ECO:0000315"/>
    <property type="project" value="BHF-UCL"/>
</dbReference>
<dbReference type="GO" id="GO:0003198">
    <property type="term" value="P:epithelial to mesenchymal transition involved in endocardial cushion formation"/>
    <property type="evidence" value="ECO:0007669"/>
    <property type="project" value="Ensembl"/>
</dbReference>
<dbReference type="GO" id="GO:0060325">
    <property type="term" value="P:face morphogenesis"/>
    <property type="evidence" value="ECO:0000315"/>
    <property type="project" value="BHF-UCL"/>
</dbReference>
<dbReference type="GO" id="GO:0001701">
    <property type="term" value="P:in utero embryonic development"/>
    <property type="evidence" value="ECO:0007669"/>
    <property type="project" value="Ensembl"/>
</dbReference>
<dbReference type="GO" id="GO:0048839">
    <property type="term" value="P:inner ear development"/>
    <property type="evidence" value="ECO:0000250"/>
    <property type="project" value="UniProtKB"/>
</dbReference>
<dbReference type="GO" id="GO:0061180">
    <property type="term" value="P:mammary gland epithelium development"/>
    <property type="evidence" value="ECO:0007669"/>
    <property type="project" value="Ensembl"/>
</dbReference>
<dbReference type="GO" id="GO:0097152">
    <property type="term" value="P:mesenchymal cell apoptotic process"/>
    <property type="evidence" value="ECO:0007669"/>
    <property type="project" value="Ensembl"/>
</dbReference>
<dbReference type="GO" id="GO:0010463">
    <property type="term" value="P:mesenchymal cell proliferation"/>
    <property type="evidence" value="ECO:0007669"/>
    <property type="project" value="Ensembl"/>
</dbReference>
<dbReference type="GO" id="GO:0030901">
    <property type="term" value="P:midbrain development"/>
    <property type="evidence" value="ECO:0007669"/>
    <property type="project" value="Ensembl"/>
</dbReference>
<dbReference type="GO" id="GO:0042474">
    <property type="term" value="P:middle ear morphogenesis"/>
    <property type="evidence" value="ECO:0007669"/>
    <property type="project" value="Ensembl"/>
</dbReference>
<dbReference type="GO" id="GO:0007517">
    <property type="term" value="P:muscle organ development"/>
    <property type="evidence" value="ECO:0007669"/>
    <property type="project" value="Ensembl"/>
</dbReference>
<dbReference type="GO" id="GO:0043066">
    <property type="term" value="P:negative regulation of apoptotic process"/>
    <property type="evidence" value="ECO:0007669"/>
    <property type="project" value="Ensembl"/>
</dbReference>
<dbReference type="GO" id="GO:0030308">
    <property type="term" value="P:negative regulation of cell growth"/>
    <property type="evidence" value="ECO:0000314"/>
    <property type="project" value="BHF-UCL"/>
</dbReference>
<dbReference type="GO" id="GO:0008285">
    <property type="term" value="P:negative regulation of cell population proliferation"/>
    <property type="evidence" value="ECO:0007669"/>
    <property type="project" value="Ensembl"/>
</dbReference>
<dbReference type="GO" id="GO:0010629">
    <property type="term" value="P:negative regulation of gene expression"/>
    <property type="evidence" value="ECO:0000250"/>
    <property type="project" value="UniProtKB"/>
</dbReference>
<dbReference type="GO" id="GO:1901330">
    <property type="term" value="P:negative regulation of odontoblast differentiation"/>
    <property type="evidence" value="ECO:0000250"/>
    <property type="project" value="UniProtKB"/>
</dbReference>
<dbReference type="GO" id="GO:0051154">
    <property type="term" value="P:negative regulation of striated muscle cell differentiation"/>
    <property type="evidence" value="ECO:0007669"/>
    <property type="project" value="Ensembl"/>
</dbReference>
<dbReference type="GO" id="GO:0043584">
    <property type="term" value="P:nose development"/>
    <property type="evidence" value="ECO:0000250"/>
    <property type="project" value="UniProtKB"/>
</dbReference>
<dbReference type="GO" id="GO:0042475">
    <property type="term" value="P:odontogenesis of dentin-containing tooth"/>
    <property type="evidence" value="ECO:0000315"/>
    <property type="project" value="BHF-UCL"/>
</dbReference>
<dbReference type="GO" id="GO:0021983">
    <property type="term" value="P:pituitary gland development"/>
    <property type="evidence" value="ECO:0007669"/>
    <property type="project" value="Ensembl"/>
</dbReference>
<dbReference type="GO" id="GO:0030513">
    <property type="term" value="P:positive regulation of BMP signaling pathway"/>
    <property type="evidence" value="ECO:0007669"/>
    <property type="project" value="Ensembl"/>
</dbReference>
<dbReference type="GO" id="GO:0045787">
    <property type="term" value="P:positive regulation of cell cycle"/>
    <property type="evidence" value="ECO:0000250"/>
    <property type="project" value="UniProtKB"/>
</dbReference>
<dbReference type="GO" id="GO:0043517">
    <property type="term" value="P:positive regulation of DNA damage response, signal transduction by p53 class mediator"/>
    <property type="evidence" value="ECO:0000305"/>
    <property type="project" value="BHF-UCL"/>
</dbReference>
<dbReference type="GO" id="GO:1902255">
    <property type="term" value="P:positive regulation of intrinsic apoptotic signaling pathway by p53 class mediator"/>
    <property type="evidence" value="ECO:0000314"/>
    <property type="project" value="BHF-UCL"/>
</dbReference>
<dbReference type="GO" id="GO:2001055">
    <property type="term" value="P:positive regulation of mesenchymal cell apoptotic process"/>
    <property type="evidence" value="ECO:0007669"/>
    <property type="project" value="Ensembl"/>
</dbReference>
<dbReference type="GO" id="GO:0042482">
    <property type="term" value="P:positive regulation of odontogenesis"/>
    <property type="evidence" value="ECO:0000250"/>
    <property type="project" value="UniProtKB"/>
</dbReference>
<dbReference type="GO" id="GO:0034504">
    <property type="term" value="P:protein localization to nucleus"/>
    <property type="evidence" value="ECO:0000314"/>
    <property type="project" value="BHF-UCL"/>
</dbReference>
<dbReference type="GO" id="GO:0050821">
    <property type="term" value="P:protein stabilization"/>
    <property type="evidence" value="ECO:0000314"/>
    <property type="project" value="BHF-UCL"/>
</dbReference>
<dbReference type="GO" id="GO:0042481">
    <property type="term" value="P:regulation of odontogenesis"/>
    <property type="evidence" value="ECO:0000250"/>
    <property type="project" value="UniProtKB"/>
</dbReference>
<dbReference type="GO" id="GO:0006357">
    <property type="term" value="P:regulation of transcription by RNA polymerase II"/>
    <property type="evidence" value="ECO:0000318"/>
    <property type="project" value="GO_Central"/>
</dbReference>
<dbReference type="GO" id="GO:0060021">
    <property type="term" value="P:roof of mouth development"/>
    <property type="evidence" value="ECO:0000250"/>
    <property type="project" value="UniProtKB"/>
</dbReference>
<dbReference type="GO" id="GO:0023019">
    <property type="term" value="P:signal transduction involved in regulation of gene expression"/>
    <property type="evidence" value="ECO:0007669"/>
    <property type="project" value="Ensembl"/>
</dbReference>
<dbReference type="GO" id="GO:0048863">
    <property type="term" value="P:stem cell differentiation"/>
    <property type="evidence" value="ECO:0007669"/>
    <property type="project" value="Ensembl"/>
</dbReference>
<dbReference type="GO" id="GO:0006366">
    <property type="term" value="P:transcription by RNA polymerase II"/>
    <property type="evidence" value="ECO:0007669"/>
    <property type="project" value="Ensembl"/>
</dbReference>
<dbReference type="CDD" id="cd00086">
    <property type="entry name" value="homeodomain"/>
    <property type="match status" value="1"/>
</dbReference>
<dbReference type="FunFam" id="1.10.10.60:FF:000134">
    <property type="entry name" value="Homeobox protein MSX-1"/>
    <property type="match status" value="1"/>
</dbReference>
<dbReference type="Gene3D" id="1.10.10.60">
    <property type="entry name" value="Homeodomain-like"/>
    <property type="match status" value="1"/>
</dbReference>
<dbReference type="InterPro" id="IPR001356">
    <property type="entry name" value="HD"/>
</dbReference>
<dbReference type="InterPro" id="IPR020479">
    <property type="entry name" value="HD_metazoa"/>
</dbReference>
<dbReference type="InterPro" id="IPR017970">
    <property type="entry name" value="Homeobox_CS"/>
</dbReference>
<dbReference type="InterPro" id="IPR009057">
    <property type="entry name" value="Homeodomain-like_sf"/>
</dbReference>
<dbReference type="InterPro" id="IPR050674">
    <property type="entry name" value="Msh_Homeobox_Regulators"/>
</dbReference>
<dbReference type="PANTHER" id="PTHR24338">
    <property type="entry name" value="HOMEOBOX PROTEIN MSX"/>
    <property type="match status" value="1"/>
</dbReference>
<dbReference type="PANTHER" id="PTHR24338:SF8">
    <property type="entry name" value="HOMEOBOX PROTEIN MSX-1"/>
    <property type="match status" value="1"/>
</dbReference>
<dbReference type="Pfam" id="PF00046">
    <property type="entry name" value="Homeodomain"/>
    <property type="match status" value="1"/>
</dbReference>
<dbReference type="PRINTS" id="PR00024">
    <property type="entry name" value="HOMEOBOX"/>
</dbReference>
<dbReference type="SMART" id="SM00389">
    <property type="entry name" value="HOX"/>
    <property type="match status" value="1"/>
</dbReference>
<dbReference type="SUPFAM" id="SSF46689">
    <property type="entry name" value="Homeodomain-like"/>
    <property type="match status" value="1"/>
</dbReference>
<dbReference type="PROSITE" id="PS00027">
    <property type="entry name" value="HOMEOBOX_1"/>
    <property type="match status" value="1"/>
</dbReference>
<dbReference type="PROSITE" id="PS50071">
    <property type="entry name" value="HOMEOBOX_2"/>
    <property type="match status" value="1"/>
</dbReference>
<protein>
    <recommendedName>
        <fullName evidence="12">Homeobox protein MSX-1</fullName>
    </recommendedName>
    <alternativeName>
        <fullName>Homeobox protein Hox-7</fullName>
    </alternativeName>
    <alternativeName>
        <fullName>Msh homeobox 1-like protein</fullName>
    </alternativeName>
</protein>
<feature type="chain" id="PRO_0000049086" description="Homeobox protein MSX-1">
    <location>
        <begin position="1"/>
        <end position="303"/>
    </location>
</feature>
<feature type="DNA-binding region" description="Homeobox" evidence="2">
    <location>
        <begin position="172"/>
        <end position="231"/>
    </location>
</feature>
<feature type="region of interest" description="Disordered" evidence="3">
    <location>
        <begin position="18"/>
        <end position="55"/>
    </location>
</feature>
<feature type="region of interest" description="Disordered" evidence="3">
    <location>
        <begin position="69"/>
        <end position="117"/>
    </location>
</feature>
<feature type="region of interest" description="Disordered" evidence="3">
    <location>
        <begin position="133"/>
        <end position="174"/>
    </location>
</feature>
<feature type="compositionally biased region" description="Low complexity" evidence="3">
    <location>
        <begin position="31"/>
        <end position="44"/>
    </location>
</feature>
<feature type="compositionally biased region" description="Basic and acidic residues" evidence="3">
    <location>
        <begin position="133"/>
        <end position="142"/>
    </location>
</feature>
<feature type="cross-link" description="Glycyl lysine isopeptide (Lys-Gly) (interchain with G-Cter in SUMO)" evidence="1">
    <location>
        <position position="15"/>
    </location>
</feature>
<feature type="cross-link" description="Glycyl lysine isopeptide (Lys-Gly) (interchain with G-Cter in SUMO)" evidence="1">
    <location>
        <position position="133"/>
    </location>
</feature>
<feature type="sequence variant" id="VAR_015712" description="In STHAG1; dbSNP:rs121913130." evidence="5">
    <original>M</original>
    <variation>K</variation>
    <location>
        <position position="67"/>
    </location>
</feature>
<feature type="sequence variant" id="VAR_018391" description="In OFC5; cleft palate only; dbSNP:rs28928890." evidence="6">
    <original>E</original>
    <variation>V</variation>
    <location>
        <position position="84"/>
    </location>
</feature>
<feature type="sequence variant" id="VAR_018392" description="In OFC5; cleft palate only." evidence="6">
    <original>G</original>
    <variation>D</variation>
    <location>
        <position position="97"/>
    </location>
</feature>
<feature type="sequence variant" id="VAR_018393" description="In OFC5; cleft palate only; dbSNP:rs759548721." evidence="6">
    <original>V</original>
    <variation>G</variation>
    <location>
        <position position="120"/>
    </location>
</feature>
<feature type="sequence variant" id="VAR_018394" description="In OFC5; bilateral cleft palate; dbSNP:rs28933081." evidence="6">
    <original>G</original>
    <variation>E</variation>
    <location>
        <position position="122"/>
    </location>
</feature>
<feature type="sequence variant" id="VAR_018395" description="In OFC5; unilateral cleft palate; dbSNP:rs150284621." evidence="6 7">
    <original>R</original>
    <variation>S</variation>
    <location>
        <position position="157"/>
    </location>
</feature>
<feature type="sequence variant" id="VAR_003754" description="In STHAG1; dbSNP:rs121913129." evidence="9">
    <original>R</original>
    <variation>P</variation>
    <location>
        <position position="202"/>
    </location>
</feature>
<feature type="sequence variant" id="VAR_088427" description="In ECTD3; dbSNP:rs104893853." evidence="4">
    <location>
        <begin position="208"/>
        <end position="303"/>
    </location>
</feature>
<feature type="sequence conflict" description="In Ref. 4; BAF83325." evidence="12" ref="4">
    <original>G</original>
    <variation>D</variation>
    <location>
        <position position="28"/>
    </location>
</feature>
<feature type="sequence conflict" description="In Ref. 2; AAA58665." evidence="12" ref="2">
    <original>A</original>
    <variation>T</variation>
    <location>
        <position position="45"/>
    </location>
</feature>
<feature type="sequence conflict" description="In Ref. 2; AAA58665." evidence="12" ref="2">
    <original>GVP</original>
    <variation>ASR</variation>
    <location>
        <begin position="97"/>
        <end position="99"/>
    </location>
</feature>
<feature type="sequence conflict" description="In Ref. 4; BAF83325." evidence="12" ref="4">
    <original>M</original>
    <variation>T</variation>
    <location>
        <position position="146"/>
    </location>
</feature>
<feature type="sequence conflict" description="In Ref. 4; BAF83325." evidence="12" ref="4">
    <original>N</original>
    <variation>S</variation>
    <location>
        <position position="222"/>
    </location>
</feature>
<evidence type="ECO:0000250" key="1">
    <source>
        <dbReference type="UniProtKB" id="P13297"/>
    </source>
</evidence>
<evidence type="ECO:0000255" key="2">
    <source>
        <dbReference type="PROSITE-ProRule" id="PRU00108"/>
    </source>
</evidence>
<evidence type="ECO:0000256" key="3">
    <source>
        <dbReference type="SAM" id="MobiDB-lite"/>
    </source>
</evidence>
<evidence type="ECO:0000269" key="4">
    <source>
    </source>
</evidence>
<evidence type="ECO:0000269" key="5">
    <source>
    </source>
</evidence>
<evidence type="ECO:0000269" key="6">
    <source>
    </source>
</evidence>
<evidence type="ECO:0000269" key="7">
    <source>
    </source>
</evidence>
<evidence type="ECO:0000269" key="8">
    <source>
    </source>
</evidence>
<evidence type="ECO:0000269" key="9">
    <source>
    </source>
</evidence>
<evidence type="ECO:0000303" key="10">
    <source>
    </source>
</evidence>
<evidence type="ECO:0000303" key="11">
    <source>
    </source>
</evidence>
<evidence type="ECO:0000305" key="12"/>
<evidence type="ECO:0000305" key="13">
    <source>
    </source>
</evidence>
<evidence type="ECO:0000312" key="14">
    <source>
        <dbReference type="HGNC" id="HGNC:7391"/>
    </source>
</evidence>
<proteinExistence type="evidence at protein level"/>
<name>MSX1_HUMAN</name>
<accession>P28360</accession>
<accession>A0SZU5</accession>
<accession>A8K3M1</accession>
<accession>Q96NY4</accession>
<sequence length="303" mass="31496">MAPAADMTSLPLGVKVEDSAFGKPAGGGAGQAPSAAAATAAAMGADEEGAKPKVSPSLLPFSVEALMADHRKPGAKESALAPSEGVQAAGGSAQPLGVPPGSLGAPDAPSSPRPLGHFSVGGLLKLPEDALVKAESPEKPERTPWMQSPRFSPPPARRLSPPACTLRKHKTNRKPRTPFTTAQLLALERKFRQKQYLSIAERAEFSSSLSLTETQVKIWFQNRRAKAKRLQEAELEKLKMAAKPMLPPAAFGLSFPLGGPAAVAAAAGASLYGASGPFQRAALPVAPVGLYTAHVGYSMYHLT</sequence>
<reference key="1">
    <citation type="journal article" date="1991" name="Genomics">
        <title>Structure and sequence of the human homeobox gene HOX7.</title>
        <authorList>
            <person name="Hewitt J.E."/>
            <person name="Clarke L.E."/>
            <person name="Iven A."/>
            <person name="Williamson R."/>
        </authorList>
    </citation>
    <scope>NUCLEOTIDE SEQUENCE [GENOMIC DNA]</scope>
    <source>
        <tissue>Lymphocyte</tissue>
    </source>
</reference>
<reference key="2">
    <citation type="journal article" date="1992" name="Hum. Mol. Genet.">
        <title>Characterization of the human HOX 7 cDNA and identification of polymorphic markers.</title>
        <authorList>
            <person name="Padanilam B.J."/>
            <person name="Stadler S.H."/>
            <person name="Mills K.A."/>
            <person name="McLeod L.B."/>
            <person name="Solursh M."/>
            <person name="Lee B.M."/>
            <person name="Ramirez F."/>
            <person name="Buetow K.H."/>
            <person name="Murray J.C."/>
        </authorList>
    </citation>
    <scope>NUCLEOTIDE SEQUENCE [MRNA]</scope>
    <source>
        <tissue>Ectomesenchyme</tissue>
    </source>
</reference>
<reference key="3">
    <citation type="journal article" date="2003" name="J. Med. Genet.">
        <title>Complete sequencing shows a role for MSX1 in non-syndromic cleft lip and palate.</title>
        <authorList>
            <person name="Jezewski P.A."/>
            <person name="Vieira A.R."/>
            <person name="Nishimura C."/>
            <person name="Ludwig B."/>
            <person name="Johnson M."/>
            <person name="O'Brien S.E."/>
            <person name="Daack-Hirsch S."/>
            <person name="Schultz R.E."/>
            <person name="Weber A."/>
            <person name="Nepomucena B."/>
            <person name="Romitti P.A."/>
            <person name="Christensen K."/>
            <person name="Orioli I.M."/>
            <person name="Castilla E.E."/>
            <person name="Machida J."/>
            <person name="Natsume N."/>
            <person name="Murray J.C."/>
        </authorList>
    </citation>
    <scope>NUCLEOTIDE SEQUENCE [GENOMIC DNA]</scope>
    <scope>VARIANTS OFC5 VAL-84; ASP-97; GLY-120; GLU-122 AND SER-157</scope>
</reference>
<reference key="4">
    <citation type="journal article" date="2004" name="Nat. Genet.">
        <title>Complete sequencing and characterization of 21,243 full-length human cDNAs.</title>
        <authorList>
            <person name="Ota T."/>
            <person name="Suzuki Y."/>
            <person name="Nishikawa T."/>
            <person name="Otsuki T."/>
            <person name="Sugiyama T."/>
            <person name="Irie R."/>
            <person name="Wakamatsu A."/>
            <person name="Hayashi K."/>
            <person name="Sato H."/>
            <person name="Nagai K."/>
            <person name="Kimura K."/>
            <person name="Makita H."/>
            <person name="Sekine M."/>
            <person name="Obayashi M."/>
            <person name="Nishi T."/>
            <person name="Shibahara T."/>
            <person name="Tanaka T."/>
            <person name="Ishii S."/>
            <person name="Yamamoto J."/>
            <person name="Saito K."/>
            <person name="Kawai Y."/>
            <person name="Isono Y."/>
            <person name="Nakamura Y."/>
            <person name="Nagahari K."/>
            <person name="Murakami K."/>
            <person name="Yasuda T."/>
            <person name="Iwayanagi T."/>
            <person name="Wagatsuma M."/>
            <person name="Shiratori A."/>
            <person name="Sudo H."/>
            <person name="Hosoiri T."/>
            <person name="Kaku Y."/>
            <person name="Kodaira H."/>
            <person name="Kondo H."/>
            <person name="Sugawara M."/>
            <person name="Takahashi M."/>
            <person name="Kanda K."/>
            <person name="Yokoi T."/>
            <person name="Furuya T."/>
            <person name="Kikkawa E."/>
            <person name="Omura Y."/>
            <person name="Abe K."/>
            <person name="Kamihara K."/>
            <person name="Katsuta N."/>
            <person name="Sato K."/>
            <person name="Tanikawa M."/>
            <person name="Yamazaki M."/>
            <person name="Ninomiya K."/>
            <person name="Ishibashi T."/>
            <person name="Yamashita H."/>
            <person name="Murakawa K."/>
            <person name="Fujimori K."/>
            <person name="Tanai H."/>
            <person name="Kimata M."/>
            <person name="Watanabe M."/>
            <person name="Hiraoka S."/>
            <person name="Chiba Y."/>
            <person name="Ishida S."/>
            <person name="Ono Y."/>
            <person name="Takiguchi S."/>
            <person name="Watanabe S."/>
            <person name="Yosida M."/>
            <person name="Hotuta T."/>
            <person name="Kusano J."/>
            <person name="Kanehori K."/>
            <person name="Takahashi-Fujii A."/>
            <person name="Hara H."/>
            <person name="Tanase T.-O."/>
            <person name="Nomura Y."/>
            <person name="Togiya S."/>
            <person name="Komai F."/>
            <person name="Hara R."/>
            <person name="Takeuchi K."/>
            <person name="Arita M."/>
            <person name="Imose N."/>
            <person name="Musashino K."/>
            <person name="Yuuki H."/>
            <person name="Oshima A."/>
            <person name="Sasaki N."/>
            <person name="Aotsuka S."/>
            <person name="Yoshikawa Y."/>
            <person name="Matsunawa H."/>
            <person name="Ichihara T."/>
            <person name="Shiohata N."/>
            <person name="Sano S."/>
            <person name="Moriya S."/>
            <person name="Momiyama H."/>
            <person name="Satoh N."/>
            <person name="Takami S."/>
            <person name="Terashima Y."/>
            <person name="Suzuki O."/>
            <person name="Nakagawa S."/>
            <person name="Senoh A."/>
            <person name="Mizoguchi H."/>
            <person name="Goto Y."/>
            <person name="Shimizu F."/>
            <person name="Wakebe H."/>
            <person name="Hishigaki H."/>
            <person name="Watanabe T."/>
            <person name="Sugiyama A."/>
            <person name="Takemoto M."/>
            <person name="Kawakami B."/>
            <person name="Yamazaki M."/>
            <person name="Watanabe K."/>
            <person name="Kumagai A."/>
            <person name="Itakura S."/>
            <person name="Fukuzumi Y."/>
            <person name="Fujimori Y."/>
            <person name="Komiyama M."/>
            <person name="Tashiro H."/>
            <person name="Tanigami A."/>
            <person name="Fujiwara T."/>
            <person name="Ono T."/>
            <person name="Yamada K."/>
            <person name="Fujii Y."/>
            <person name="Ozaki K."/>
            <person name="Hirao M."/>
            <person name="Ohmori Y."/>
            <person name="Kawabata A."/>
            <person name="Hikiji T."/>
            <person name="Kobatake N."/>
            <person name="Inagaki H."/>
            <person name="Ikema Y."/>
            <person name="Okamoto S."/>
            <person name="Okitani R."/>
            <person name="Kawakami T."/>
            <person name="Noguchi S."/>
            <person name="Itoh T."/>
            <person name="Shigeta K."/>
            <person name="Senba T."/>
            <person name="Matsumura K."/>
            <person name="Nakajima Y."/>
            <person name="Mizuno T."/>
            <person name="Morinaga M."/>
            <person name="Sasaki M."/>
            <person name="Togashi T."/>
            <person name="Oyama M."/>
            <person name="Hata H."/>
            <person name="Watanabe M."/>
            <person name="Komatsu T."/>
            <person name="Mizushima-Sugano J."/>
            <person name="Satoh T."/>
            <person name="Shirai Y."/>
            <person name="Takahashi Y."/>
            <person name="Nakagawa K."/>
            <person name="Okumura K."/>
            <person name="Nagase T."/>
            <person name="Nomura N."/>
            <person name="Kikuchi H."/>
            <person name="Masuho Y."/>
            <person name="Yamashita R."/>
            <person name="Nakai K."/>
            <person name="Yada T."/>
            <person name="Nakamura Y."/>
            <person name="Ohara O."/>
            <person name="Isogai T."/>
            <person name="Sugano S."/>
        </authorList>
    </citation>
    <scope>NUCLEOTIDE SEQUENCE [LARGE SCALE MRNA]</scope>
    <scope>VARIANT SER-157</scope>
    <source>
        <tissue>Embryo</tissue>
    </source>
</reference>
<reference key="5">
    <citation type="journal article" date="2005" name="Nature">
        <title>Generation and annotation of the DNA sequences of human chromosomes 2 and 4.</title>
        <authorList>
            <person name="Hillier L.W."/>
            <person name="Graves T.A."/>
            <person name="Fulton R.S."/>
            <person name="Fulton L.A."/>
            <person name="Pepin K.H."/>
            <person name="Minx P."/>
            <person name="Wagner-McPherson C."/>
            <person name="Layman D."/>
            <person name="Wylie K."/>
            <person name="Sekhon M."/>
            <person name="Becker M.C."/>
            <person name="Fewell G.A."/>
            <person name="Delehaunty K.D."/>
            <person name="Miner T.L."/>
            <person name="Nash W.E."/>
            <person name="Kremitzki C."/>
            <person name="Oddy L."/>
            <person name="Du H."/>
            <person name="Sun H."/>
            <person name="Bradshaw-Cordum H."/>
            <person name="Ali J."/>
            <person name="Carter J."/>
            <person name="Cordes M."/>
            <person name="Harris A."/>
            <person name="Isak A."/>
            <person name="van Brunt A."/>
            <person name="Nguyen C."/>
            <person name="Du F."/>
            <person name="Courtney L."/>
            <person name="Kalicki J."/>
            <person name="Ozersky P."/>
            <person name="Abbott S."/>
            <person name="Armstrong J."/>
            <person name="Belter E.A."/>
            <person name="Caruso L."/>
            <person name="Cedroni M."/>
            <person name="Cotton M."/>
            <person name="Davidson T."/>
            <person name="Desai A."/>
            <person name="Elliott G."/>
            <person name="Erb T."/>
            <person name="Fronick C."/>
            <person name="Gaige T."/>
            <person name="Haakenson W."/>
            <person name="Haglund K."/>
            <person name="Holmes A."/>
            <person name="Harkins R."/>
            <person name="Kim K."/>
            <person name="Kruchowski S.S."/>
            <person name="Strong C.M."/>
            <person name="Grewal N."/>
            <person name="Goyea E."/>
            <person name="Hou S."/>
            <person name="Levy A."/>
            <person name="Martinka S."/>
            <person name="Mead K."/>
            <person name="McLellan M.D."/>
            <person name="Meyer R."/>
            <person name="Randall-Maher J."/>
            <person name="Tomlinson C."/>
            <person name="Dauphin-Kohlberg S."/>
            <person name="Kozlowicz-Reilly A."/>
            <person name="Shah N."/>
            <person name="Swearengen-Shahid S."/>
            <person name="Snider J."/>
            <person name="Strong J.T."/>
            <person name="Thompson J."/>
            <person name="Yoakum M."/>
            <person name="Leonard S."/>
            <person name="Pearman C."/>
            <person name="Trani L."/>
            <person name="Radionenko M."/>
            <person name="Waligorski J.E."/>
            <person name="Wang C."/>
            <person name="Rock S.M."/>
            <person name="Tin-Wollam A.-M."/>
            <person name="Maupin R."/>
            <person name="Latreille P."/>
            <person name="Wendl M.C."/>
            <person name="Yang S.-P."/>
            <person name="Pohl C."/>
            <person name="Wallis J.W."/>
            <person name="Spieth J."/>
            <person name="Bieri T.A."/>
            <person name="Berkowicz N."/>
            <person name="Nelson J.O."/>
            <person name="Osborne J."/>
            <person name="Ding L."/>
            <person name="Meyer R."/>
            <person name="Sabo A."/>
            <person name="Shotland Y."/>
            <person name="Sinha P."/>
            <person name="Wohldmann P.E."/>
            <person name="Cook L.L."/>
            <person name="Hickenbotham M.T."/>
            <person name="Eldred J."/>
            <person name="Williams D."/>
            <person name="Jones T.A."/>
            <person name="She X."/>
            <person name="Ciccarelli F.D."/>
            <person name="Izaurralde E."/>
            <person name="Taylor J."/>
            <person name="Schmutz J."/>
            <person name="Myers R.M."/>
            <person name="Cox D.R."/>
            <person name="Huang X."/>
            <person name="McPherson J.D."/>
            <person name="Mardis E.R."/>
            <person name="Clifton S.W."/>
            <person name="Warren W.C."/>
            <person name="Chinwalla A.T."/>
            <person name="Eddy S.R."/>
            <person name="Marra M.A."/>
            <person name="Ovcharenko I."/>
            <person name="Furey T.S."/>
            <person name="Miller W."/>
            <person name="Eichler E.E."/>
            <person name="Bork P."/>
            <person name="Suyama M."/>
            <person name="Torrents D."/>
            <person name="Waterston R.H."/>
            <person name="Wilson R.K."/>
        </authorList>
    </citation>
    <scope>NUCLEOTIDE SEQUENCE [LARGE SCALE GENOMIC DNA]</scope>
</reference>
<reference key="6">
    <citation type="journal article" date="2004" name="Genome Res.">
        <title>The status, quality, and expansion of the NIH full-length cDNA project: the Mammalian Gene Collection (MGC).</title>
        <authorList>
            <consortium name="The MGC Project Team"/>
        </authorList>
    </citation>
    <scope>NUCLEOTIDE SEQUENCE [LARGE SCALE MRNA]</scope>
    <source>
        <tissue>Neuroblastoma</tissue>
        <tissue>Pancreatic carcinoma</tissue>
    </source>
</reference>
<reference key="7">
    <citation type="submission" date="2006-10" db="EMBL/GenBank/DDBJ databases">
        <title>Single nucleotide polymorphism analysis of the MSX1 gene within Indian population for cleft lip and palate.</title>
        <authorList>
            <person name="Prasad S."/>
            <person name="Shama Rao K."/>
            <person name="Mukhyopadhyay A."/>
        </authorList>
    </citation>
    <scope>NUCLEOTIDE SEQUENCE [GENOMIC DNA] OF 1-156</scope>
</reference>
<reference key="8">
    <citation type="journal article" date="1990" name="Hum. Genet.">
        <title>The human homeobox gene HOX7 maps to chromosome 4p16.1 and may be implicated in Wolf-Hirschhorn syndrome.</title>
        <authorList>
            <person name="Ivens A."/>
            <person name="Flavin N."/>
            <person name="Williamson R."/>
            <person name="Dixon M."/>
            <person name="Bates G."/>
            <person name="Buckingham M."/>
            <person name="Robert B."/>
        </authorList>
    </citation>
    <scope>NUCLEOTIDE SEQUENCE [GENOMIC DNA] OF 191-251</scope>
    <scope>INVOLVEMENT IN WOLF-HIRSCHHORN SYNDROME</scope>
</reference>
<reference key="9">
    <citation type="journal article" date="2006" name="Genes Dev.">
        <title>PIAS1 confers DNA-binding specificity on the Msx1 homeoprotein.</title>
        <authorList>
            <person name="Lee H."/>
            <person name="Quinn J.C."/>
            <person name="Prasanth K.V."/>
            <person name="Swiss V.A."/>
            <person name="Economides K.D."/>
            <person name="Camacho M.M."/>
            <person name="Spector D.L."/>
            <person name="Abate-Shen C."/>
        </authorList>
    </citation>
    <scope>INTERACTION WITH PIAS1</scope>
</reference>
<reference key="10">
    <citation type="journal article" date="1996" name="Nat. Genet.">
        <title>A human MSX1 homeodomain missense mutation causes selective tooth agenesis.</title>
        <authorList>
            <person name="Vastardis H."/>
            <person name="Karimbux N."/>
            <person name="Guthua S.W."/>
            <person name="Seidman J.G."/>
            <person name="Seidman C.E."/>
        </authorList>
    </citation>
    <scope>VARIANT STHAG1 PRO-202</scope>
</reference>
<reference key="11">
    <citation type="journal article" date="2001" name="Am. J. Hum. Genet.">
        <title>A nonsense mutation in MSX1 causes Witkop syndrome.</title>
        <authorList>
            <person name="Jumlongras D."/>
            <person name="Bei M."/>
            <person name="Stimson J.M."/>
            <person name="Wang W.-F."/>
            <person name="DePalma S.R."/>
            <person name="Seidman C.E."/>
            <person name="Felbor U."/>
            <person name="Maas R."/>
            <person name="Seidman J.G."/>
            <person name="Olsen B.R."/>
        </authorList>
    </citation>
    <scope>VARIANT ECTD3 208-SER--THR-303 DEL</scope>
</reference>
<reference key="12">
    <citation type="journal article" date="2002" name="J. Dent. Res.">
        <title>The role of MSX1 in human tooth agenesis.</title>
        <authorList>
            <person name="Lidral A.C."/>
            <person name="Reising B.C."/>
        </authorList>
    </citation>
    <scope>VARIANT STHAG1 LYS-67</scope>
</reference>
<comment type="function">
    <text evidence="1 6 11">Acts as a transcriptional repressor (By similarity). Capable of transcription autoinactivation (By similarity). Binds to the consensus sequence 5'-C/GTAAT-3' in downstream activin regulatory elements (DARE) in the gene promoter, thereby repressing the transcription of CGA/alpha-GSU and GNRHR (By similarity). Represses transcription of myoblast differentiation factors (By similarity). Binds to core enhancer regions in target gene promoters of myoblast differentiation factors with binding specificity facilitated by interaction with PIAS1 (By similarity). Regulates, in a stage-specific manner, a developmental program of gene expression in the fetal tooth bud that controls odontoblast differentiation and proliferation of dental mesenchymal cells (By similarity). At the bud stage, required for mesenchymal molar tooth bud development via facilitating reciprocal signaling between dental epithelial and mesenchymal cells (By similarity). May also regulate expression of Wnt antagonists such as DKK2 and SFPR2 in the developing tooth mesenchyme (By similarity). Required for BMP4 expression in dental mesenchyme cells (By similarity). Also, in response to BMP4, required for BMP4 expression in neighboring dental epithelial cells (By similarity). Required for maximal FGF4-induced expression of SDC1 in dental mesenchyme cells (By similarity). Also in response to SDC1, required for SDC1 expression in neighboring dental epithelial cells (By similarity). At the early bell stage, acts to drive proliferation of dental mesenchyme cells, however during the late bell stage acts as an homeostatic regulator of the cell cycle (By similarity). Regulates proliferation and inhibits premature mesenchymal odontogenesis during the bell stage via inhibition of the Wnt signaling component CTNNB1 and subsequent repression of the odontoblast differentiation factors BMP2, BMP4, LEF1, ALPL and BGLAP/OCN (By similarity). Additionally, required for correct development and fusion of the palatal shelves and embryonic mandibular formation (By similarity). Plays a role in embryonic bone formation of the middle ear, skull and nasal bones (By similarity). Required for correct formation and thickness of the nail plate (By similarity). May play a role in limb-pattern formation (By similarity).</text>
</comment>
<comment type="subunit">
    <text evidence="1 8">Interacts with CREBBP/CBP, TBP and SP1; interaction with these transcription activators may inhibit autoinactivation (By similarity). Interacts (via C-terminus) with PIAS1 (via N-terminus); the interaction is required for the localization of both proteins to the nuclear periphery and specific binding of MSX1 to the core enhancer region in target gene promoters (PubMed:16600910). Interacts with H1-5 (By similarity).</text>
</comment>
<comment type="interaction">
    <interactant intactId="EBI-3919342">
        <id>P28360</id>
    </interactant>
    <interactant intactId="EBI-740343">
        <id>Q93062-3</id>
        <label>RBPMS</label>
    </interactant>
    <organismsDiffer>false</organismsDiffer>
    <experiments>3</experiments>
</comment>
<comment type="subcellular location">
    <subcellularLocation>
        <location evidence="1">Nucleus</location>
    </subcellularLocation>
    <text evidence="1">Interaction with PIAS1 is required for localization to the nuclear periphery (By similarity).</text>
</comment>
<comment type="PTM">
    <text evidence="1">Sumoylated by PIAS1, desumoylated by SENP1 (By similarity). Sumoylation of Lys-15 and Lys-133 not required for interaction with H1-5, transcriptional repression, inhibition of myoblast differentiation, or binding to gene promoters (By similarity).</text>
</comment>
<comment type="disease" evidence="5 9">
    <disease id="DI-01211">
        <name>Tooth agenesis, selective, 1</name>
        <acronym>STHAG1</acronym>
        <description>A form of selective tooth agenesis, a common anomaly characterized by the congenital absence of one or more teeth. Selective tooth agenesis without associated systemic disorders has sometimes been divided into 2 types: oligodontia, defined as agenesis of 6 or more permanent teeth, and hypodontia, defined as agenesis of less than 6 teeth. The number in both cases does not include absence of third molars (wisdom teeth). STHAG1 can be associated with orofacial cleft in some patients.</description>
        <dbReference type="MIM" id="106600"/>
    </disease>
    <text>The disease is caused by variants affecting the gene represented in this entry.</text>
</comment>
<comment type="disease">
    <text evidence="13">MSX1 is deleted in some patients with Wolf-Hirschhorn syndrome (WHS). WHS results from sub-telomeric deletions in the short arm of chromosome 4.</text>
</comment>
<comment type="disease" evidence="4">
    <disease id="DI-01148">
        <name>Ectodermal dysplasia 3, Witkop type</name>
        <acronym>ECTD3</acronym>
        <description>A form of ectodermal dysplasia, a heterogeneous group of disorders due to abnormal development of two or more ectodermal structures such as hair, teeth, nails and sweat glands, with or without any additional clinical sign. Each combination of clinical features represents a different type of ectodermal dysplasia. ECTD3 is characterized by abnormalities largely limited largely to teeth (some of which are missing) and nails (which are poorly formed early in life, especially toenails). This condition is distinguished from anhidrotic ectodermal dysplasia by autosomal dominant inheritance and little involvement of hair and sweat glands. The teeth are not as severely affected.</description>
        <dbReference type="MIM" id="189500"/>
    </disease>
    <text>The disease is caused by variants affecting the gene represented in this entry.</text>
</comment>
<comment type="disease" evidence="6">
    <disease id="DI-00826">
        <name>Non-syndromic orofacial cleft 5</name>
        <acronym>OFC5</acronym>
        <description>A birth defect consisting of cleft lips with or without cleft palate. Cleft lips are associated with cleft palate in two-third of cases. A cleft lip can occur on one or both sides and range in severity from a simple notch in the upper lip to a complete opening in the lip extending into the floor of the nostril and involving the upper gum.</description>
        <dbReference type="MIM" id="608874"/>
    </disease>
    <text>The disease is caused by variants affecting the gene represented in this entry.</text>
</comment>
<comment type="similarity">
    <text evidence="12">Belongs to the Msh homeobox family.</text>
</comment>
<comment type="caution">
    <text evidence="12">It is uncertain whether Met-1 or Met-7 is the initiator.</text>
</comment>
<comment type="sequence caution" evidence="12">
    <conflict type="erroneous initiation">
        <sequence resource="EMBL-CDS" id="AAA52683"/>
    </conflict>
    <text>Truncated N-terminus.</text>
</comment>
<comment type="sequence caution" evidence="12">
    <conflict type="erroneous initiation">
        <sequence resource="EMBL-CDS" id="AAA58665"/>
    </conflict>
    <text>Truncated N-terminus.</text>
</comment>
<comment type="sequence caution" evidence="12">
    <conflict type="erroneous initiation">
        <sequence resource="EMBL-CDS" id="AAH67353"/>
    </conflict>
    <text>Truncated N-terminus.</text>
</comment>
<comment type="sequence caution" evidence="12">
    <conflict type="erroneous initiation">
        <sequence resource="EMBL-CDS" id="AAL17870"/>
    </conflict>
    <text>Truncated N-terminus.</text>
</comment>
<comment type="sequence caution" evidence="12">
    <conflict type="erroneous initiation">
        <sequence resource="EMBL-CDS" id="ABK81117"/>
    </conflict>
    <text>Truncated N-terminus.</text>
</comment>
<comment type="sequence caution" evidence="12">
    <conflict type="erroneous initiation">
        <sequence resource="EMBL-CDS" id="BAF83325"/>
    </conflict>
    <text>Truncated N-terminus.</text>
</comment>